<comment type="function">
    <text evidence="1">The heterodimer acts as both an ATP-dependent DNA helicase and an ATP-dependent, dual-direction single-stranded exonuclease. Recognizes the chi site generating a DNA molecule suitable for the initiation of homologous recombination. The AddB subunit has 5' -&gt; 3' nuclease activity but not helicase activity.</text>
</comment>
<comment type="cofactor">
    <cofactor evidence="1">
        <name>Mg(2+)</name>
        <dbReference type="ChEBI" id="CHEBI:18420"/>
    </cofactor>
</comment>
<comment type="cofactor">
    <cofactor evidence="1">
        <name>[4Fe-4S] cluster</name>
        <dbReference type="ChEBI" id="CHEBI:49883"/>
    </cofactor>
    <text evidence="1">Binds 1 [4Fe-4S] cluster.</text>
</comment>
<comment type="subunit">
    <text evidence="1">Heterodimer of AddA and AddB.</text>
</comment>
<comment type="miscellaneous">
    <text evidence="1">Despite having conserved helicase domains, this subunit does not have helicase activity.</text>
</comment>
<comment type="similarity">
    <text evidence="1">Belongs to the helicase family. AddB/RexB type 1 subfamily.</text>
</comment>
<proteinExistence type="inferred from homology"/>
<name>ADDB_MOOTA</name>
<reference key="1">
    <citation type="journal article" date="2008" name="Environ. Microbiol.">
        <title>The complete genome sequence of Moorella thermoacetica (f. Clostridium thermoaceticum).</title>
        <authorList>
            <person name="Pierce E."/>
            <person name="Xie G."/>
            <person name="Barabote R.D."/>
            <person name="Saunders E."/>
            <person name="Han C.S."/>
            <person name="Detter J.C."/>
            <person name="Richardson P."/>
            <person name="Brettin T.S."/>
            <person name="Das A."/>
            <person name="Ljungdahl L.G."/>
            <person name="Ragsdale S.W."/>
        </authorList>
    </citation>
    <scope>NUCLEOTIDE SEQUENCE [LARGE SCALE GENOMIC DNA]</scope>
    <source>
        <strain>ATCC 39073 / JCM 9320</strain>
    </source>
</reference>
<evidence type="ECO:0000255" key="1">
    <source>
        <dbReference type="HAMAP-Rule" id="MF_01452"/>
    </source>
</evidence>
<protein>
    <recommendedName>
        <fullName evidence="1">ATP-dependent helicase/deoxyribonuclease subunit B</fullName>
        <ecNumber evidence="1">3.1.-.-</ecNumber>
    </recommendedName>
    <alternativeName>
        <fullName evidence="1">ATP-dependent helicase/nuclease subunit AddB</fullName>
    </alternativeName>
</protein>
<dbReference type="EC" id="3.1.-.-" evidence="1"/>
<dbReference type="EMBL" id="CP000232">
    <property type="protein sequence ID" value="ABC18811.1"/>
    <property type="molecule type" value="Genomic_DNA"/>
</dbReference>
<dbReference type="RefSeq" id="YP_429354.1">
    <property type="nucleotide sequence ID" value="NC_007644.1"/>
</dbReference>
<dbReference type="SMR" id="Q2RL78"/>
<dbReference type="STRING" id="264732.Moth_0481"/>
<dbReference type="EnsemblBacteria" id="ABC18811">
    <property type="protein sequence ID" value="ABC18811"/>
    <property type="gene ID" value="Moth_0481"/>
</dbReference>
<dbReference type="KEGG" id="mta:Moth_0481"/>
<dbReference type="PATRIC" id="fig|264732.11.peg.517"/>
<dbReference type="eggNOG" id="COG3857">
    <property type="taxonomic scope" value="Bacteria"/>
</dbReference>
<dbReference type="HOGENOM" id="CLU_007838_0_0_9"/>
<dbReference type="OrthoDB" id="9758506at2"/>
<dbReference type="GO" id="GO:0051539">
    <property type="term" value="F:4 iron, 4 sulfur cluster binding"/>
    <property type="evidence" value="ECO:0007669"/>
    <property type="project" value="UniProtKB-KW"/>
</dbReference>
<dbReference type="GO" id="GO:0008409">
    <property type="term" value="F:5'-3' exonuclease activity"/>
    <property type="evidence" value="ECO:0007669"/>
    <property type="project" value="UniProtKB-UniRule"/>
</dbReference>
<dbReference type="GO" id="GO:0005524">
    <property type="term" value="F:ATP binding"/>
    <property type="evidence" value="ECO:0007669"/>
    <property type="project" value="UniProtKB-UniRule"/>
</dbReference>
<dbReference type="GO" id="GO:0003690">
    <property type="term" value="F:double-stranded DNA binding"/>
    <property type="evidence" value="ECO:0007669"/>
    <property type="project" value="UniProtKB-UniRule"/>
</dbReference>
<dbReference type="GO" id="GO:0004386">
    <property type="term" value="F:helicase activity"/>
    <property type="evidence" value="ECO:0007669"/>
    <property type="project" value="UniProtKB-KW"/>
</dbReference>
<dbReference type="GO" id="GO:0046872">
    <property type="term" value="F:metal ion binding"/>
    <property type="evidence" value="ECO:0007669"/>
    <property type="project" value="UniProtKB-KW"/>
</dbReference>
<dbReference type="GO" id="GO:0000724">
    <property type="term" value="P:double-strand break repair via homologous recombination"/>
    <property type="evidence" value="ECO:0007669"/>
    <property type="project" value="UniProtKB-UniRule"/>
</dbReference>
<dbReference type="Gene3D" id="3.90.320.10">
    <property type="match status" value="1"/>
</dbReference>
<dbReference type="Gene3D" id="3.40.50.300">
    <property type="entry name" value="P-loop containing nucleotide triphosphate hydrolases"/>
    <property type="match status" value="4"/>
</dbReference>
<dbReference type="HAMAP" id="MF_01452">
    <property type="entry name" value="AddB_type1"/>
    <property type="match status" value="1"/>
</dbReference>
<dbReference type="InterPro" id="IPR049035">
    <property type="entry name" value="ADDB_N"/>
</dbReference>
<dbReference type="InterPro" id="IPR014140">
    <property type="entry name" value="DNA_helicase_suAddB"/>
</dbReference>
<dbReference type="InterPro" id="IPR014017">
    <property type="entry name" value="DNA_helicase_UvrD-like_C"/>
</dbReference>
<dbReference type="InterPro" id="IPR027417">
    <property type="entry name" value="P-loop_NTPase"/>
</dbReference>
<dbReference type="InterPro" id="IPR011604">
    <property type="entry name" value="PDDEXK-like_dom_sf"/>
</dbReference>
<dbReference type="InterPro" id="IPR038726">
    <property type="entry name" value="PDDEXK_AddAB-type"/>
</dbReference>
<dbReference type="NCBIfam" id="TIGR02773">
    <property type="entry name" value="addB_Gpos"/>
    <property type="match status" value="1"/>
</dbReference>
<dbReference type="PANTHER" id="PTHR30591">
    <property type="entry name" value="RECBCD ENZYME SUBUNIT RECC"/>
    <property type="match status" value="1"/>
</dbReference>
<dbReference type="PANTHER" id="PTHR30591:SF1">
    <property type="entry name" value="RECBCD ENZYME SUBUNIT RECC"/>
    <property type="match status" value="1"/>
</dbReference>
<dbReference type="Pfam" id="PF21445">
    <property type="entry name" value="ADDB_N"/>
    <property type="match status" value="1"/>
</dbReference>
<dbReference type="Pfam" id="PF12705">
    <property type="entry name" value="PDDEXK_1"/>
    <property type="match status" value="1"/>
</dbReference>
<dbReference type="SUPFAM" id="SSF52540">
    <property type="entry name" value="P-loop containing nucleoside triphosphate hydrolases"/>
    <property type="match status" value="2"/>
</dbReference>
<dbReference type="PROSITE" id="PS51198">
    <property type="entry name" value="UVRD_HELICASE_ATP_BIND"/>
    <property type="match status" value="1"/>
</dbReference>
<dbReference type="PROSITE" id="PS51217">
    <property type="entry name" value="UVRD_HELICASE_CTER"/>
    <property type="match status" value="1"/>
</dbReference>
<sequence>MALRLVLGRAGSGKTRLCLEEIKAILAEGPAGPALIILTPEQATLQMELDLHRAAGVPGFSRVQVLSFRRLGWRVFQEAGGAARPHLGEMGKAMALRAVVSAHRDDLGLFAPLAGSPGFIEQLAHTIAELKLYRVTPADLDRILERYRETGREQTILARKLRDLALVYRELETYLAGRYLDPDDYLTLLAGRLPEAAFIRGARVWVDGFNGFTPQEEAVLQALMAVAEQVTVTLCLDPTLRHRRLGETELFHPTGETYHRLRQLALAAGVRVEDDVCLAGTPPRFREAPALAHLEAHFGRWPLRPFRGDAAGIRLVAAANRRVEVEAAAREILRLAREENLSWRQMAVLVRDLEPYHDLIVNTFRDFNIPLFIDRRRPVGHHPLVELVRAALEAVLEDWAYDPVFRYLKSDLVPVPREEIDLLENYVLAHGIRGRRWRDSRPWQYGNSRDLETPSPPGSAAGETINAIRERASCHLRRFDGALRGRQLTGREITAALFDLLQELGVPERLAAWSRQAAAAGDLDAAQEHEQIWEGLMDLLEELVLALGDTSLELEEYAAILDTGLESLKLRLIPPALDQVVAGTLDRSRQPELQAAFVLGVGEGVLPARLPEDATFSDREREELRAAGLELAPTGTLRLFHEEFLAYLALTRSRRYLWLSYPLADAEGKALSPSPLVRRLRQLLPGLREETAGTELPGGDDDLVYLTTPRQAAGHLARLLGRGRPLPPLWQEVYRWLHQDARGQKMLGLLEGGGYRNQVDPLEPELARGLYPRPLRLSISQLETFAGCPFRYFLSYGLGLQERRLYQVDPAGMGQFYHAALKLFVEELGRRGLDWGRLSDNEAAAIISQVVDSLAPALQHEILSSSARYGYLRKKLEQTLQRVMEVLNEHARRGEFRPLAVETSFGCRGKLPPLQLDAGPGRRVFLEGRVDRIDVARRQGRPYLRVIDYKSSPTTLDLTAVYYGLALQLPLYLRAALDAAPELLGEAAEPAGMLYFAVRNPLIRQRGPVGKEAAARLRRQELKMRGLLLDDVEVIKLMDREIAASPDLLPLRLNKDGSLRKGAPVAGREEMALLLDLALARAAELAGAILSGRVEISPYRRGQETACDFCPYRPVCAFDPQIPGSGYRRLGNLPGDFWQLAAAFLGSQMKG</sequence>
<organism>
    <name type="scientific">Moorella thermoacetica (strain ATCC 39073 / JCM 9320)</name>
    <dbReference type="NCBI Taxonomy" id="264732"/>
    <lineage>
        <taxon>Bacteria</taxon>
        <taxon>Bacillati</taxon>
        <taxon>Bacillota</taxon>
        <taxon>Clostridia</taxon>
        <taxon>Moorellales</taxon>
        <taxon>Moorellaceae</taxon>
        <taxon>Moorella</taxon>
    </lineage>
</organism>
<keyword id="KW-0004">4Fe-4S</keyword>
<keyword id="KW-0067">ATP-binding</keyword>
<keyword id="KW-0227">DNA damage</keyword>
<keyword id="KW-0234">DNA repair</keyword>
<keyword id="KW-0238">DNA-binding</keyword>
<keyword id="KW-0269">Exonuclease</keyword>
<keyword id="KW-0347">Helicase</keyword>
<keyword id="KW-0378">Hydrolase</keyword>
<keyword id="KW-0408">Iron</keyword>
<keyword id="KW-0411">Iron-sulfur</keyword>
<keyword id="KW-0479">Metal-binding</keyword>
<keyword id="KW-0540">Nuclease</keyword>
<keyword id="KW-0547">Nucleotide-binding</keyword>
<gene>
    <name evidence="1" type="primary">addB</name>
    <name type="ordered locus">Moth_0481</name>
</gene>
<feature type="chain" id="PRO_0000379200" description="ATP-dependent helicase/deoxyribonuclease subunit B">
    <location>
        <begin position="1"/>
        <end position="1151"/>
    </location>
</feature>
<feature type="domain" description="UvrD-like helicase ATP-binding" evidence="1">
    <location>
        <begin position="1"/>
        <end position="273"/>
    </location>
</feature>
<feature type="domain" description="UvrD-like helicase C-terminal" evidence="1">
    <location>
        <begin position="282"/>
        <end position="578"/>
    </location>
</feature>
<feature type="binding site" evidence="1">
    <location>
        <begin position="8"/>
        <end position="15"/>
    </location>
    <ligand>
        <name>ATP</name>
        <dbReference type="ChEBI" id="CHEBI:30616"/>
    </ligand>
</feature>
<feature type="binding site" evidence="1">
    <location>
        <position position="788"/>
    </location>
    <ligand>
        <name>[4Fe-4S] cluster</name>
        <dbReference type="ChEBI" id="CHEBI:49883"/>
    </ligand>
</feature>
<feature type="binding site" evidence="1">
    <location>
        <position position="1107"/>
    </location>
    <ligand>
        <name>[4Fe-4S] cluster</name>
        <dbReference type="ChEBI" id="CHEBI:49883"/>
    </ligand>
</feature>
<feature type="binding site" evidence="1">
    <location>
        <position position="1110"/>
    </location>
    <ligand>
        <name>[4Fe-4S] cluster</name>
        <dbReference type="ChEBI" id="CHEBI:49883"/>
    </ligand>
</feature>
<feature type="binding site" evidence="1">
    <location>
        <position position="1116"/>
    </location>
    <ligand>
        <name>[4Fe-4S] cluster</name>
        <dbReference type="ChEBI" id="CHEBI:49883"/>
    </ligand>
</feature>
<accession>Q2RL78</accession>